<keyword id="KW-0963">Cytoplasm</keyword>
<keyword id="KW-0489">Methyltransferase</keyword>
<keyword id="KW-0698">rRNA processing</keyword>
<keyword id="KW-0949">S-adenosyl-L-methionine</keyword>
<keyword id="KW-0808">Transferase</keyword>
<feature type="chain" id="PRO_0000342929" description="Ribosomal RNA small subunit methyltransferase G">
    <location>
        <begin position="1"/>
        <end position="202"/>
    </location>
</feature>
<feature type="binding site" evidence="1">
    <location>
        <position position="75"/>
    </location>
    <ligand>
        <name>S-adenosyl-L-methionine</name>
        <dbReference type="ChEBI" id="CHEBI:59789"/>
    </ligand>
</feature>
<feature type="binding site" evidence="1">
    <location>
        <position position="80"/>
    </location>
    <ligand>
        <name>S-adenosyl-L-methionine</name>
        <dbReference type="ChEBI" id="CHEBI:59789"/>
    </ligand>
</feature>
<feature type="binding site" evidence="1">
    <location>
        <begin position="125"/>
        <end position="126"/>
    </location>
    <ligand>
        <name>S-adenosyl-L-methionine</name>
        <dbReference type="ChEBI" id="CHEBI:59789"/>
    </ligand>
</feature>
<feature type="binding site" evidence="1">
    <location>
        <position position="139"/>
    </location>
    <ligand>
        <name>S-adenosyl-L-methionine</name>
        <dbReference type="ChEBI" id="CHEBI:59789"/>
    </ligand>
</feature>
<accession>Q4A772</accession>
<sequence length="202" mass="23435">MYKRLVQEFFPKLDFENLEKYVNLIEFSNKNFNLTAFSGDILWKEGIFESIFTMNFIVGLVNNKENKKLKILDIGAGSGFPSIPFLITNPEIELTISESMQKRCQFLKDISEKLDLKFNLICKPVQEIDPQKFDIITARAVANLEKLEKITKKIHFPKTLLAFIKGPKVFNEVQNCKNCNYKIIKVNNNINKKIFIAFKQVS</sequence>
<dbReference type="EC" id="2.1.1.-" evidence="1"/>
<dbReference type="EMBL" id="AE017244">
    <property type="protein sequence ID" value="AAZ54017.1"/>
    <property type="molecule type" value="Genomic_DNA"/>
</dbReference>
<dbReference type="RefSeq" id="WP_011290429.1">
    <property type="nucleotide sequence ID" value="NC_007332.1"/>
</dbReference>
<dbReference type="SMR" id="Q4A772"/>
<dbReference type="KEGG" id="mhp:MHP7448_0655"/>
<dbReference type="HOGENOM" id="CLU_065341_2_1_14"/>
<dbReference type="Proteomes" id="UP000000553">
    <property type="component" value="Chromosome"/>
</dbReference>
<dbReference type="GO" id="GO:0005829">
    <property type="term" value="C:cytosol"/>
    <property type="evidence" value="ECO:0007669"/>
    <property type="project" value="TreeGrafter"/>
</dbReference>
<dbReference type="GO" id="GO:0070043">
    <property type="term" value="F:rRNA (guanine-N7-)-methyltransferase activity"/>
    <property type="evidence" value="ECO:0007669"/>
    <property type="project" value="UniProtKB-UniRule"/>
</dbReference>
<dbReference type="Gene3D" id="3.40.50.150">
    <property type="entry name" value="Vaccinia Virus protein VP39"/>
    <property type="match status" value="1"/>
</dbReference>
<dbReference type="HAMAP" id="MF_00074">
    <property type="entry name" value="16SrRNA_methyltr_G"/>
    <property type="match status" value="1"/>
</dbReference>
<dbReference type="InterPro" id="IPR003682">
    <property type="entry name" value="rRNA_ssu_MeTfrase_G"/>
</dbReference>
<dbReference type="InterPro" id="IPR029063">
    <property type="entry name" value="SAM-dependent_MTases_sf"/>
</dbReference>
<dbReference type="NCBIfam" id="TIGR00138">
    <property type="entry name" value="rsmG_gidB"/>
    <property type="match status" value="1"/>
</dbReference>
<dbReference type="PANTHER" id="PTHR31760">
    <property type="entry name" value="S-ADENOSYL-L-METHIONINE-DEPENDENT METHYLTRANSFERASES SUPERFAMILY PROTEIN"/>
    <property type="match status" value="1"/>
</dbReference>
<dbReference type="PANTHER" id="PTHR31760:SF0">
    <property type="entry name" value="S-ADENOSYL-L-METHIONINE-DEPENDENT METHYLTRANSFERASES SUPERFAMILY PROTEIN"/>
    <property type="match status" value="1"/>
</dbReference>
<dbReference type="Pfam" id="PF02527">
    <property type="entry name" value="GidB"/>
    <property type="match status" value="1"/>
</dbReference>
<dbReference type="PIRSF" id="PIRSF003078">
    <property type="entry name" value="GidB"/>
    <property type="match status" value="1"/>
</dbReference>
<dbReference type="SUPFAM" id="SSF53335">
    <property type="entry name" value="S-adenosyl-L-methionine-dependent methyltransferases"/>
    <property type="match status" value="1"/>
</dbReference>
<evidence type="ECO:0000255" key="1">
    <source>
        <dbReference type="HAMAP-Rule" id="MF_00074"/>
    </source>
</evidence>
<organism>
    <name type="scientific">Mesomycoplasma hyopneumoniae (strain 7448)</name>
    <name type="common">Mycoplasma hyopneumoniae</name>
    <dbReference type="NCBI Taxonomy" id="262722"/>
    <lineage>
        <taxon>Bacteria</taxon>
        <taxon>Bacillati</taxon>
        <taxon>Mycoplasmatota</taxon>
        <taxon>Mycoplasmoidales</taxon>
        <taxon>Metamycoplasmataceae</taxon>
        <taxon>Mesomycoplasma</taxon>
    </lineage>
</organism>
<proteinExistence type="inferred from homology"/>
<name>RSMG_MESH7</name>
<comment type="function">
    <text evidence="1">Specifically methylates the N7 position of a guanine in 16S rRNA.</text>
</comment>
<comment type="subcellular location">
    <subcellularLocation>
        <location evidence="1">Cytoplasm</location>
    </subcellularLocation>
</comment>
<comment type="similarity">
    <text evidence="1">Belongs to the methyltransferase superfamily. RNA methyltransferase RsmG family.</text>
</comment>
<gene>
    <name evidence="1" type="primary">rsmG</name>
    <name type="ordered locus">MHP7448_0655</name>
</gene>
<reference key="1">
    <citation type="journal article" date="2005" name="J. Bacteriol.">
        <title>Swine and poultry pathogens: the complete genome sequences of two strains of Mycoplasma hyopneumoniae and a strain of Mycoplasma synoviae.</title>
        <authorList>
            <person name="Vasconcelos A.T.R."/>
            <person name="Ferreira H.B."/>
            <person name="Bizarro C.V."/>
            <person name="Bonatto S.L."/>
            <person name="Carvalho M.O."/>
            <person name="Pinto P.M."/>
            <person name="Almeida D.F."/>
            <person name="Almeida L.G.P."/>
            <person name="Almeida R."/>
            <person name="Alves-Junior L."/>
            <person name="Assuncao E.N."/>
            <person name="Azevedo V.A.C."/>
            <person name="Bogo M.R."/>
            <person name="Brigido M.M."/>
            <person name="Brocchi M."/>
            <person name="Burity H.A."/>
            <person name="Camargo A.A."/>
            <person name="Camargo S.S."/>
            <person name="Carepo M.S."/>
            <person name="Carraro D.M."/>
            <person name="de Mattos Cascardo J.C."/>
            <person name="Castro L.A."/>
            <person name="Cavalcanti G."/>
            <person name="Chemale G."/>
            <person name="Collevatti R.G."/>
            <person name="Cunha C.W."/>
            <person name="Dallagiovanna B."/>
            <person name="Dambros B.P."/>
            <person name="Dellagostin O.A."/>
            <person name="Falcao C."/>
            <person name="Fantinatti-Garboggini F."/>
            <person name="Felipe M.S.S."/>
            <person name="Fiorentin L."/>
            <person name="Franco G.R."/>
            <person name="Freitas N.S.A."/>
            <person name="Frias D."/>
            <person name="Grangeiro T.B."/>
            <person name="Grisard E.C."/>
            <person name="Guimaraes C.T."/>
            <person name="Hungria M."/>
            <person name="Jardim S.N."/>
            <person name="Krieger M.A."/>
            <person name="Laurino J.P."/>
            <person name="Lima L.F.A."/>
            <person name="Lopes M.I."/>
            <person name="Loreto E.L.S."/>
            <person name="Madeira H.M.F."/>
            <person name="Manfio G.P."/>
            <person name="Maranhao A.Q."/>
            <person name="Martinkovics C.T."/>
            <person name="Medeiros S.R.B."/>
            <person name="Moreira M.A.M."/>
            <person name="Neiva M."/>
            <person name="Ramalho-Neto C.E."/>
            <person name="Nicolas M.F."/>
            <person name="Oliveira S.C."/>
            <person name="Paixao R.F.C."/>
            <person name="Pedrosa F.O."/>
            <person name="Pena S.D.J."/>
            <person name="Pereira M."/>
            <person name="Pereira-Ferrari L."/>
            <person name="Piffer I."/>
            <person name="Pinto L.S."/>
            <person name="Potrich D.P."/>
            <person name="Salim A.C.M."/>
            <person name="Santos F.R."/>
            <person name="Schmitt R."/>
            <person name="Schneider M.P.C."/>
            <person name="Schrank A."/>
            <person name="Schrank I.S."/>
            <person name="Schuck A.F."/>
            <person name="Seuanez H.N."/>
            <person name="Silva D.W."/>
            <person name="Silva R."/>
            <person name="Silva S.C."/>
            <person name="Soares C.M.A."/>
            <person name="Souza K.R.L."/>
            <person name="Souza R.C."/>
            <person name="Staats C.C."/>
            <person name="Steffens M.B.R."/>
            <person name="Teixeira S.M.R."/>
            <person name="Urmenyi T.P."/>
            <person name="Vainstein M.H."/>
            <person name="Zuccherato L.W."/>
            <person name="Simpson A.J.G."/>
            <person name="Zaha A."/>
        </authorList>
    </citation>
    <scope>NUCLEOTIDE SEQUENCE [LARGE SCALE GENOMIC DNA]</scope>
    <source>
        <strain>7448</strain>
    </source>
</reference>
<protein>
    <recommendedName>
        <fullName evidence="1">Ribosomal RNA small subunit methyltransferase G</fullName>
        <ecNumber evidence="1">2.1.1.-</ecNumber>
    </recommendedName>
    <alternativeName>
        <fullName evidence="1">16S rRNA 7-methylguanosine methyltransferase</fullName>
        <shortName evidence="1">16S rRNA m7G methyltransferase</shortName>
    </alternativeName>
</protein>